<sequence>MAYAYLFKYIIIGDTGVGKSCLLLQFTDKRFQPVHDLTIGVEFGARMITIDGKQIKLQIWDTAGQESFRSITRSYYRGAAGALLVYDITRRDTFNHLTTWLEDARQHSNSNMVIMLIGNKSDLESRREVKKEEGEAFAREHGLIFMETSAKTASNVEEAFINTAKEIYEKIQEGVFDINNEANGIKIGPQHAATNATHAGNQGGQQAGGGCC</sequence>
<name>RAB2A_MACFA</name>
<evidence type="ECO:0000250" key="1"/>
<evidence type="ECO:0000250" key="2">
    <source>
        <dbReference type="UniProtKB" id="P53994"/>
    </source>
</evidence>
<evidence type="ECO:0000250" key="3">
    <source>
        <dbReference type="UniProtKB" id="P61019"/>
    </source>
</evidence>
<evidence type="ECO:0000250" key="4">
    <source>
        <dbReference type="UniProtKB" id="P61106"/>
    </source>
</evidence>
<evidence type="ECO:0000305" key="5"/>
<protein>
    <recommendedName>
        <fullName>Ras-related protein Rab-2A</fullName>
        <ecNumber evidence="2">3.6.5.2</ecNumber>
    </recommendedName>
</protein>
<gene>
    <name type="primary">RAB2A</name>
    <name type="synonym">RAB2</name>
    <name type="ORF">QtrA-12017</name>
    <name type="ORF">QtsA-19013</name>
</gene>
<proteinExistence type="evidence at transcript level"/>
<dbReference type="EC" id="3.6.5.2" evidence="2"/>
<dbReference type="EMBL" id="AB169319">
    <property type="protein sequence ID" value="BAE01404.1"/>
    <property type="molecule type" value="mRNA"/>
</dbReference>
<dbReference type="EMBL" id="AB169768">
    <property type="protein sequence ID" value="BAE01849.1"/>
    <property type="molecule type" value="mRNA"/>
</dbReference>
<dbReference type="RefSeq" id="NP_001270889.1">
    <property type="nucleotide sequence ID" value="NM_001283960.1"/>
</dbReference>
<dbReference type="RefSeq" id="XP_045254240.1">
    <property type="nucleotide sequence ID" value="XM_045398305.2"/>
</dbReference>
<dbReference type="SMR" id="Q4R4X6"/>
<dbReference type="STRING" id="9541.ENSMFAP00000037107"/>
<dbReference type="GeneID" id="101926772"/>
<dbReference type="VEuPathDB" id="HostDB:ENSMFAG00000037805"/>
<dbReference type="eggNOG" id="KOG0098">
    <property type="taxonomic scope" value="Eukaryota"/>
</dbReference>
<dbReference type="OMA" id="TNATHAC"/>
<dbReference type="Proteomes" id="UP000233100">
    <property type="component" value="Chromosome 8"/>
</dbReference>
<dbReference type="GO" id="GO:0001669">
    <property type="term" value="C:acrosomal vesicle"/>
    <property type="evidence" value="ECO:0007669"/>
    <property type="project" value="UniProtKB-SubCell"/>
</dbReference>
<dbReference type="GO" id="GO:0000421">
    <property type="term" value="C:autophagosome membrane"/>
    <property type="evidence" value="ECO:0007669"/>
    <property type="project" value="UniProtKB-SubCell"/>
</dbReference>
<dbReference type="GO" id="GO:0005789">
    <property type="term" value="C:endoplasmic reticulum membrane"/>
    <property type="evidence" value="ECO:0007669"/>
    <property type="project" value="UniProtKB-SubCell"/>
</dbReference>
<dbReference type="GO" id="GO:0033116">
    <property type="term" value="C:endoplasmic reticulum-Golgi intermediate compartment membrane"/>
    <property type="evidence" value="ECO:0007669"/>
    <property type="project" value="UniProtKB-SubCell"/>
</dbReference>
<dbReference type="GO" id="GO:0000139">
    <property type="term" value="C:Golgi membrane"/>
    <property type="evidence" value="ECO:0007669"/>
    <property type="project" value="UniProtKB-SubCell"/>
</dbReference>
<dbReference type="GO" id="GO:0042470">
    <property type="term" value="C:melanosome"/>
    <property type="evidence" value="ECO:0007669"/>
    <property type="project" value="UniProtKB-SubCell"/>
</dbReference>
<dbReference type="GO" id="GO:0003925">
    <property type="term" value="F:G protein activity"/>
    <property type="evidence" value="ECO:0000250"/>
    <property type="project" value="UniProtKB"/>
</dbReference>
<dbReference type="GO" id="GO:0019003">
    <property type="term" value="F:GDP binding"/>
    <property type="evidence" value="ECO:0000250"/>
    <property type="project" value="UniProtKB"/>
</dbReference>
<dbReference type="GO" id="GO:0005525">
    <property type="term" value="F:GTP binding"/>
    <property type="evidence" value="ECO:0000250"/>
    <property type="project" value="UniProtKB"/>
</dbReference>
<dbReference type="GO" id="GO:0003924">
    <property type="term" value="F:GTPase activity"/>
    <property type="evidence" value="ECO:0000250"/>
    <property type="project" value="UniProtKB"/>
</dbReference>
<dbReference type="GO" id="GO:0061909">
    <property type="term" value="P:autophagosome-lysosome fusion"/>
    <property type="evidence" value="ECO:0000250"/>
    <property type="project" value="UniProtKB"/>
</dbReference>
<dbReference type="GO" id="GO:0007030">
    <property type="term" value="P:Golgi organization"/>
    <property type="evidence" value="ECO:0000250"/>
    <property type="project" value="UniProtKB"/>
</dbReference>
<dbReference type="GO" id="GO:0016236">
    <property type="term" value="P:macroautophagy"/>
    <property type="evidence" value="ECO:0000250"/>
    <property type="project" value="UniProtKB"/>
</dbReference>
<dbReference type="GO" id="GO:0015031">
    <property type="term" value="P:protein transport"/>
    <property type="evidence" value="ECO:0007669"/>
    <property type="project" value="UniProtKB-KW"/>
</dbReference>
<dbReference type="CDD" id="cd01866">
    <property type="entry name" value="Rab2"/>
    <property type="match status" value="1"/>
</dbReference>
<dbReference type="FunFam" id="3.40.50.300:FF:000275">
    <property type="entry name" value="Putative ras-related protein Rab-2A"/>
    <property type="match status" value="1"/>
</dbReference>
<dbReference type="Gene3D" id="3.40.50.300">
    <property type="entry name" value="P-loop containing nucleotide triphosphate hydrolases"/>
    <property type="match status" value="1"/>
</dbReference>
<dbReference type="InterPro" id="IPR027417">
    <property type="entry name" value="P-loop_NTPase"/>
</dbReference>
<dbReference type="InterPro" id="IPR050209">
    <property type="entry name" value="Rab_GTPases_membrane_traffic"/>
</dbReference>
<dbReference type="InterPro" id="IPR005225">
    <property type="entry name" value="Small_GTP-bd"/>
</dbReference>
<dbReference type="InterPro" id="IPR001806">
    <property type="entry name" value="Small_GTPase"/>
</dbReference>
<dbReference type="NCBIfam" id="TIGR00231">
    <property type="entry name" value="small_GTP"/>
    <property type="match status" value="1"/>
</dbReference>
<dbReference type="PANTHER" id="PTHR47979">
    <property type="entry name" value="DRAB11-RELATED"/>
    <property type="match status" value="1"/>
</dbReference>
<dbReference type="Pfam" id="PF00071">
    <property type="entry name" value="Ras"/>
    <property type="match status" value="1"/>
</dbReference>
<dbReference type="PRINTS" id="PR00449">
    <property type="entry name" value="RASTRNSFRMNG"/>
</dbReference>
<dbReference type="SMART" id="SM00175">
    <property type="entry name" value="RAB"/>
    <property type="match status" value="1"/>
</dbReference>
<dbReference type="SMART" id="SM00176">
    <property type="entry name" value="RAN"/>
    <property type="match status" value="1"/>
</dbReference>
<dbReference type="SMART" id="SM00173">
    <property type="entry name" value="RAS"/>
    <property type="match status" value="1"/>
</dbReference>
<dbReference type="SMART" id="SM00174">
    <property type="entry name" value="RHO"/>
    <property type="match status" value="1"/>
</dbReference>
<dbReference type="SUPFAM" id="SSF52540">
    <property type="entry name" value="P-loop containing nucleoside triphosphate hydrolases"/>
    <property type="match status" value="1"/>
</dbReference>
<dbReference type="PROSITE" id="PS51419">
    <property type="entry name" value="RAB"/>
    <property type="match status" value="1"/>
</dbReference>
<accession>Q4R4X6</accession>
<organism>
    <name type="scientific">Macaca fascicularis</name>
    <name type="common">Crab-eating macaque</name>
    <name type="synonym">Cynomolgus monkey</name>
    <dbReference type="NCBI Taxonomy" id="9541"/>
    <lineage>
        <taxon>Eukaryota</taxon>
        <taxon>Metazoa</taxon>
        <taxon>Chordata</taxon>
        <taxon>Craniata</taxon>
        <taxon>Vertebrata</taxon>
        <taxon>Euteleostomi</taxon>
        <taxon>Mammalia</taxon>
        <taxon>Eutheria</taxon>
        <taxon>Euarchontoglires</taxon>
        <taxon>Primates</taxon>
        <taxon>Haplorrhini</taxon>
        <taxon>Catarrhini</taxon>
        <taxon>Cercopithecidae</taxon>
        <taxon>Cercopithecinae</taxon>
        <taxon>Macaca</taxon>
    </lineage>
</organism>
<reference key="1">
    <citation type="submission" date="2005-06" db="EMBL/GenBank/DDBJ databases">
        <title>DNA sequences of macaque genes expressed in brain or testis and its evolutionary implications.</title>
        <authorList>
            <consortium name="International consortium for macaque cDNA sequencing and analysis"/>
        </authorList>
    </citation>
    <scope>NUCLEOTIDE SEQUENCE [LARGE SCALE MRNA]</scope>
    <source>
        <tissue>Temporal cortex</tissue>
        <tissue>Testis</tissue>
    </source>
</reference>
<keyword id="KW-0007">Acetylation</keyword>
<keyword id="KW-0968">Cytoplasmic vesicle</keyword>
<keyword id="KW-0256">Endoplasmic reticulum</keyword>
<keyword id="KW-0931">ER-Golgi transport</keyword>
<keyword id="KW-0333">Golgi apparatus</keyword>
<keyword id="KW-0342">GTP-binding</keyword>
<keyword id="KW-0378">Hydrolase</keyword>
<keyword id="KW-0449">Lipoprotein</keyword>
<keyword id="KW-0460">Magnesium</keyword>
<keyword id="KW-0472">Membrane</keyword>
<keyword id="KW-0479">Metal-binding</keyword>
<keyword id="KW-0547">Nucleotide-binding</keyword>
<keyword id="KW-0636">Prenylation</keyword>
<keyword id="KW-0653">Protein transport</keyword>
<keyword id="KW-1185">Reference proteome</keyword>
<keyword id="KW-0813">Transport</keyword>
<comment type="function">
    <text evidence="3">The small GTPases Rab are key regulators of intracellular membrane trafficking, from the formation of transport vesicles to their fusion with membranes. Rabs cycle between active GTP-bound and inactive GDP-bound states. In their active state, drive transport of vesicular carriers from donor organelles to acceptor organelles to regulate the membrane traffic that maintains organelle identity and morphology. RAB2A regulates autophagy by promoting autophagosome-lysosome fusion via recruitment of the HOPS endosomal tethering complex; this process involves autophagosomal RAB2A and lysosomal RAB39A recruitment of HOPS subcomplexes VPS39-VPS11 and VPS41-VPS16-VPS18-VPS33A, respectively, which assemble into a functional complex to mediate membrane tethering and SNAREs-driven membrane fusion. Required for protein transport from the endoplasmic reticulum to the Golgi complex. Regulates the compacted morphology of the Golgi. Together with RAB2B, redundantly required for efficient autophagic flux.</text>
</comment>
<comment type="catalytic activity">
    <reaction evidence="2">
        <text>GTP + H2O = GDP + phosphate + H(+)</text>
        <dbReference type="Rhea" id="RHEA:19669"/>
        <dbReference type="ChEBI" id="CHEBI:15377"/>
        <dbReference type="ChEBI" id="CHEBI:15378"/>
        <dbReference type="ChEBI" id="CHEBI:37565"/>
        <dbReference type="ChEBI" id="CHEBI:43474"/>
        <dbReference type="ChEBI" id="CHEBI:58189"/>
        <dbReference type="EC" id="3.6.5.2"/>
    </reaction>
    <physiologicalReaction direction="left-to-right" evidence="2">
        <dbReference type="Rhea" id="RHEA:19670"/>
    </physiologicalReaction>
</comment>
<comment type="cofactor">
    <cofactor evidence="3">
        <name>Mg(2+)</name>
        <dbReference type="ChEBI" id="CHEBI:18420"/>
    </cofactor>
</comment>
<comment type="activity regulation">
    <text evidence="5">Regulated by guanine nucleotide exchange factors (GEFs) which promote the exchange of bound GDP for free GTP, GTPase activating proteins (GAPs) which increase the GTP hydrolysis activity, and GDP dissociation inhibitors (GDIs) which inhibit the dissociation of the nucleotide from the GTPase.</text>
</comment>
<comment type="subunit">
    <text evidence="2 3">Interacts with PRKCI. Interacts with TRIP11 (By similarity). Interacts (in GTP-bound form) with GARIN1B (By similarity). Interacts (GTP-bound) with HOPS complex component VPS39; interaction contributes to obtaining a functional HOPS complex that promotes autophagosome-lysosome membrane fusion driven by STX17-SNAP29-VAMP8. May interact with VPS41 (By similarity).</text>
</comment>
<comment type="subcellular location">
    <subcellularLocation>
        <location evidence="3">Endoplasmic reticulum-Golgi intermediate compartment membrane</location>
        <topology evidence="3">Lipid-anchor</topology>
        <orientation evidence="5">Cytoplasmic side</orientation>
    </subcellularLocation>
    <subcellularLocation>
        <location evidence="3">Melanosome</location>
    </subcellularLocation>
    <subcellularLocation>
        <location evidence="3">Endoplasmic reticulum membrane</location>
        <topology evidence="3">Lipid-anchor</topology>
        <orientation evidence="5">Cytoplasmic side</orientation>
    </subcellularLocation>
    <subcellularLocation>
        <location evidence="3">Golgi apparatus membrane</location>
        <topology evidence="3">Lipid-anchor</topology>
        <orientation evidence="5">Cytoplasmic side</orientation>
    </subcellularLocation>
    <subcellularLocation>
        <location evidence="2">Cytoplasmic vesicle</location>
        <location evidence="2">Secretory vesicle</location>
        <location evidence="2">Acrosome</location>
    </subcellularLocation>
    <subcellularLocation>
        <location evidence="2">Cytoplasmic vesicle</location>
        <location evidence="2">Autophagosome membrane</location>
        <topology evidence="3">Lipid-anchor</topology>
        <orientation evidence="5">Cytoplasmic side</orientation>
    </subcellularLocation>
    <text evidence="2 3">Localized in the Golgi apparatus in the round spermatids and in the acrosome in the elongating spermatid (By similarity). Identified by mass spectrometry in melanosome fractions from stage I to stage IV (By similarity).</text>
</comment>
<comment type="domain">
    <text evidence="4">Switch I, switch II and the interswitch regions are characteristic of Rab GTPases and mediate the interactions with Rab downstream effectors. The switch regions undergo conformational changes upon nucleotide binding which drives interaction with specific sets of effector proteins, with most effectors only binding to GTP-bound Rab.</text>
</comment>
<comment type="PTM">
    <text evidence="3">Prenylated. Prenylation is required for association with cellular membranes.</text>
</comment>
<comment type="similarity">
    <text evidence="5">Belongs to the small GTPase superfamily. Rab family.</text>
</comment>
<feature type="initiator methionine" description="Removed" evidence="3">
    <location>
        <position position="1"/>
    </location>
</feature>
<feature type="chain" id="PRO_0000253742" description="Ras-related protein Rab-2A">
    <location>
        <begin position="2"/>
        <end position="212"/>
    </location>
</feature>
<feature type="region of interest" description="Required for interaction with PRKCI" evidence="1">
    <location>
        <begin position="2"/>
        <end position="19"/>
    </location>
</feature>
<feature type="short sequence motif" description="Switch 1" evidence="4">
    <location>
        <begin position="37"/>
        <end position="42"/>
    </location>
</feature>
<feature type="short sequence motif" description="Switch 2" evidence="4">
    <location>
        <begin position="63"/>
        <end position="72"/>
    </location>
</feature>
<feature type="binding site" evidence="4">
    <location>
        <position position="16"/>
    </location>
    <ligand>
        <name>GTP</name>
        <dbReference type="ChEBI" id="CHEBI:37565"/>
    </ligand>
</feature>
<feature type="binding site" evidence="4">
    <location>
        <position position="17"/>
    </location>
    <ligand>
        <name>GTP</name>
        <dbReference type="ChEBI" id="CHEBI:37565"/>
    </ligand>
</feature>
<feature type="binding site" evidence="4">
    <location>
        <position position="18"/>
    </location>
    <ligand>
        <name>GTP</name>
        <dbReference type="ChEBI" id="CHEBI:37565"/>
    </ligand>
</feature>
<feature type="binding site" evidence="4">
    <location>
        <position position="19"/>
    </location>
    <ligand>
        <name>GTP</name>
        <dbReference type="ChEBI" id="CHEBI:37565"/>
    </ligand>
</feature>
<feature type="binding site" evidence="4">
    <location>
        <position position="20"/>
    </location>
    <ligand>
        <name>GTP</name>
        <dbReference type="ChEBI" id="CHEBI:37565"/>
    </ligand>
</feature>
<feature type="binding site" evidence="3">
    <location>
        <position position="20"/>
    </location>
    <ligand>
        <name>Mg(2+)</name>
        <dbReference type="ChEBI" id="CHEBI:18420"/>
    </ligand>
</feature>
<feature type="binding site" evidence="4">
    <location>
        <position position="21"/>
    </location>
    <ligand>
        <name>GTP</name>
        <dbReference type="ChEBI" id="CHEBI:37565"/>
    </ligand>
</feature>
<feature type="binding site" evidence="4">
    <location>
        <position position="38"/>
    </location>
    <ligand>
        <name>GTP</name>
        <dbReference type="ChEBI" id="CHEBI:37565"/>
    </ligand>
</feature>
<feature type="binding site" evidence="4">
    <location>
        <position position="38"/>
    </location>
    <ligand>
        <name>Mg(2+)</name>
        <dbReference type="ChEBI" id="CHEBI:18420"/>
    </ligand>
</feature>
<feature type="binding site" evidence="3">
    <location>
        <position position="61"/>
    </location>
    <ligand>
        <name>Mg(2+)</name>
        <dbReference type="ChEBI" id="CHEBI:18420"/>
    </ligand>
</feature>
<feature type="binding site" evidence="4">
    <location>
        <position position="64"/>
    </location>
    <ligand>
        <name>GTP</name>
        <dbReference type="ChEBI" id="CHEBI:37565"/>
    </ligand>
</feature>
<feature type="binding site" evidence="4">
    <location>
        <position position="119"/>
    </location>
    <ligand>
        <name>GTP</name>
        <dbReference type="ChEBI" id="CHEBI:37565"/>
    </ligand>
</feature>
<feature type="binding site" evidence="4">
    <location>
        <position position="120"/>
    </location>
    <ligand>
        <name>GTP</name>
        <dbReference type="ChEBI" id="CHEBI:37565"/>
    </ligand>
</feature>
<feature type="binding site" evidence="4">
    <location>
        <position position="122"/>
    </location>
    <ligand>
        <name>GTP</name>
        <dbReference type="ChEBI" id="CHEBI:37565"/>
    </ligand>
</feature>
<feature type="binding site" evidence="4">
    <location>
        <position position="150"/>
    </location>
    <ligand>
        <name>GTP</name>
        <dbReference type="ChEBI" id="CHEBI:37565"/>
    </ligand>
</feature>
<feature type="binding site" evidence="4">
    <location>
        <position position="151"/>
    </location>
    <ligand>
        <name>GTP</name>
        <dbReference type="ChEBI" id="CHEBI:37565"/>
    </ligand>
</feature>
<feature type="modified residue" description="N-acetylalanine" evidence="3">
    <location>
        <position position="2"/>
    </location>
</feature>
<feature type="lipid moiety-binding region" description="S-geranylgeranyl cysteine" evidence="1">
    <location>
        <position position="211"/>
    </location>
</feature>
<feature type="lipid moiety-binding region" description="S-geranylgeranyl cysteine" evidence="1">
    <location>
        <position position="212"/>
    </location>
</feature>